<organism>
    <name type="scientific">Corynebacterium glutamicum (strain R)</name>
    <dbReference type="NCBI Taxonomy" id="340322"/>
    <lineage>
        <taxon>Bacteria</taxon>
        <taxon>Bacillati</taxon>
        <taxon>Actinomycetota</taxon>
        <taxon>Actinomycetes</taxon>
        <taxon>Mycobacteriales</taxon>
        <taxon>Corynebacteriaceae</taxon>
        <taxon>Corynebacterium</taxon>
    </lineage>
</organism>
<sequence>MRLVFAGTPEPAVVALQKLIDSDHEVVAVLTQPDARRGRGRTLHPSAVAELAQQHGIEVLKPTSLKADTEDGQAIRQRLAELAPDCLPVVAYGQLITKDLLDVAPHGWVNLHFSLLPAWRGAAPVQASIREGDQITGATTFRIDEGLDTGVILSTIEDTIQPTDTADDLLTRLAYSGGDLLVETMTGLEQGTITPRAQEGEATYASKITTQDAQIDWSKPAEVIDRHIRAHTPGPGAWTTLVDARLKVGPISHSGEVEVAADLAPGAILAQKNSVVVGTGTTPIVLGNIQPPGKKMMNAADWARGVQLDQEAKFQ</sequence>
<gene>
    <name evidence="1" type="primary">fmt</name>
    <name type="ordered locus">cgR_1648</name>
</gene>
<feature type="chain" id="PRO_1000020051" description="Methionyl-tRNA formyltransferase">
    <location>
        <begin position="1"/>
        <end position="315"/>
    </location>
</feature>
<feature type="binding site" evidence="1">
    <location>
        <begin position="114"/>
        <end position="117"/>
    </location>
    <ligand>
        <name>(6S)-5,6,7,8-tetrahydrofolate</name>
        <dbReference type="ChEBI" id="CHEBI:57453"/>
    </ligand>
</feature>
<evidence type="ECO:0000255" key="1">
    <source>
        <dbReference type="HAMAP-Rule" id="MF_00182"/>
    </source>
</evidence>
<comment type="function">
    <text evidence="1">Attaches a formyl group to the free amino group of methionyl-tRNA(fMet). The formyl group appears to play a dual role in the initiator identity of N-formylmethionyl-tRNA by promoting its recognition by IF2 and preventing the misappropriation of this tRNA by the elongation apparatus.</text>
</comment>
<comment type="catalytic activity">
    <reaction evidence="1">
        <text>L-methionyl-tRNA(fMet) + (6R)-10-formyltetrahydrofolate = N-formyl-L-methionyl-tRNA(fMet) + (6S)-5,6,7,8-tetrahydrofolate + H(+)</text>
        <dbReference type="Rhea" id="RHEA:24380"/>
        <dbReference type="Rhea" id="RHEA-COMP:9952"/>
        <dbReference type="Rhea" id="RHEA-COMP:9953"/>
        <dbReference type="ChEBI" id="CHEBI:15378"/>
        <dbReference type="ChEBI" id="CHEBI:57453"/>
        <dbReference type="ChEBI" id="CHEBI:78530"/>
        <dbReference type="ChEBI" id="CHEBI:78844"/>
        <dbReference type="ChEBI" id="CHEBI:195366"/>
        <dbReference type="EC" id="2.1.2.9"/>
    </reaction>
</comment>
<comment type="similarity">
    <text evidence="1">Belongs to the Fmt family.</text>
</comment>
<protein>
    <recommendedName>
        <fullName evidence="1">Methionyl-tRNA formyltransferase</fullName>
        <ecNumber evidence="1">2.1.2.9</ecNumber>
    </recommendedName>
</protein>
<keyword id="KW-0648">Protein biosynthesis</keyword>
<keyword id="KW-0808">Transferase</keyword>
<reference key="1">
    <citation type="journal article" date="2007" name="Microbiology">
        <title>Comparative analysis of the Corynebacterium glutamicum group and complete genome sequence of strain R.</title>
        <authorList>
            <person name="Yukawa H."/>
            <person name="Omumasaba C.A."/>
            <person name="Nonaka H."/>
            <person name="Kos P."/>
            <person name="Okai N."/>
            <person name="Suzuki N."/>
            <person name="Suda M."/>
            <person name="Tsuge Y."/>
            <person name="Watanabe J."/>
            <person name="Ikeda Y."/>
            <person name="Vertes A.A."/>
            <person name="Inui M."/>
        </authorList>
    </citation>
    <scope>NUCLEOTIDE SEQUENCE [LARGE SCALE GENOMIC DNA]</scope>
    <source>
        <strain>R</strain>
    </source>
</reference>
<proteinExistence type="inferred from homology"/>
<dbReference type="EC" id="2.1.2.9" evidence="1"/>
<dbReference type="EMBL" id="AP009044">
    <property type="protein sequence ID" value="BAF54640.1"/>
    <property type="molecule type" value="Genomic_DNA"/>
</dbReference>
<dbReference type="RefSeq" id="WP_003862229.1">
    <property type="nucleotide sequence ID" value="NC_009342.1"/>
</dbReference>
<dbReference type="SMR" id="A4QEH4"/>
<dbReference type="GeneID" id="1019568"/>
<dbReference type="KEGG" id="cgt:cgR_1648"/>
<dbReference type="HOGENOM" id="CLU_033347_1_0_11"/>
<dbReference type="PhylomeDB" id="A4QEH4"/>
<dbReference type="Proteomes" id="UP000006698">
    <property type="component" value="Chromosome"/>
</dbReference>
<dbReference type="GO" id="GO:0005829">
    <property type="term" value="C:cytosol"/>
    <property type="evidence" value="ECO:0007669"/>
    <property type="project" value="TreeGrafter"/>
</dbReference>
<dbReference type="GO" id="GO:0004479">
    <property type="term" value="F:methionyl-tRNA formyltransferase activity"/>
    <property type="evidence" value="ECO:0007669"/>
    <property type="project" value="UniProtKB-UniRule"/>
</dbReference>
<dbReference type="CDD" id="cd08646">
    <property type="entry name" value="FMT_core_Met-tRNA-FMT_N"/>
    <property type="match status" value="1"/>
</dbReference>
<dbReference type="CDD" id="cd08704">
    <property type="entry name" value="Met_tRNA_FMT_C"/>
    <property type="match status" value="1"/>
</dbReference>
<dbReference type="FunFam" id="3.40.50.12230:FF:000001">
    <property type="entry name" value="Methionyl-tRNA formyltransferase"/>
    <property type="match status" value="1"/>
</dbReference>
<dbReference type="Gene3D" id="3.40.50.12230">
    <property type="match status" value="1"/>
</dbReference>
<dbReference type="HAMAP" id="MF_00182">
    <property type="entry name" value="Formyl_trans"/>
    <property type="match status" value="1"/>
</dbReference>
<dbReference type="InterPro" id="IPR005794">
    <property type="entry name" value="Fmt"/>
</dbReference>
<dbReference type="InterPro" id="IPR005793">
    <property type="entry name" value="Formyl_trans_C"/>
</dbReference>
<dbReference type="InterPro" id="IPR002376">
    <property type="entry name" value="Formyl_transf_N"/>
</dbReference>
<dbReference type="InterPro" id="IPR036477">
    <property type="entry name" value="Formyl_transf_N_sf"/>
</dbReference>
<dbReference type="InterPro" id="IPR011034">
    <property type="entry name" value="Formyl_transferase-like_C_sf"/>
</dbReference>
<dbReference type="InterPro" id="IPR044135">
    <property type="entry name" value="Met-tRNA-FMT_C"/>
</dbReference>
<dbReference type="InterPro" id="IPR041711">
    <property type="entry name" value="Met-tRNA-FMT_N"/>
</dbReference>
<dbReference type="NCBIfam" id="TIGR00460">
    <property type="entry name" value="fmt"/>
    <property type="match status" value="1"/>
</dbReference>
<dbReference type="PANTHER" id="PTHR11138">
    <property type="entry name" value="METHIONYL-TRNA FORMYLTRANSFERASE"/>
    <property type="match status" value="1"/>
</dbReference>
<dbReference type="PANTHER" id="PTHR11138:SF5">
    <property type="entry name" value="METHIONYL-TRNA FORMYLTRANSFERASE, MITOCHONDRIAL"/>
    <property type="match status" value="1"/>
</dbReference>
<dbReference type="Pfam" id="PF02911">
    <property type="entry name" value="Formyl_trans_C"/>
    <property type="match status" value="1"/>
</dbReference>
<dbReference type="Pfam" id="PF00551">
    <property type="entry name" value="Formyl_trans_N"/>
    <property type="match status" value="1"/>
</dbReference>
<dbReference type="SUPFAM" id="SSF50486">
    <property type="entry name" value="FMT C-terminal domain-like"/>
    <property type="match status" value="1"/>
</dbReference>
<dbReference type="SUPFAM" id="SSF53328">
    <property type="entry name" value="Formyltransferase"/>
    <property type="match status" value="1"/>
</dbReference>
<name>FMT_CORGB</name>
<accession>A4QEH4</accession>